<feature type="chain" id="PRO_1000022593" description="ATP-dependent Clp protease adapter protein ClpS">
    <location>
        <begin position="1"/>
        <end position="104"/>
    </location>
</feature>
<sequence length="104" mass="11936">MAIIPDKQDSTVLERKQQKLKPPSMYKVVLLNDDFTPMEFVVMVVQEYFKKDRETATQIMLKVHREGRGVCGVYTRDIASTKVEQVVTHARQAGHPLQCVMEEA</sequence>
<comment type="function">
    <text evidence="1">Involved in the modulation of the specificity of the ClpAP-mediated ATP-dependent protein degradation.</text>
</comment>
<comment type="subunit">
    <text evidence="1">Binds to the N-terminal domain of the chaperone ClpA.</text>
</comment>
<comment type="similarity">
    <text evidence="1">Belongs to the ClpS family.</text>
</comment>
<proteinExistence type="inferred from homology"/>
<protein>
    <recommendedName>
        <fullName evidence="1">ATP-dependent Clp protease adapter protein ClpS</fullName>
    </recommendedName>
</protein>
<accession>A0K9U2</accession>
<organism>
    <name type="scientific">Burkholderia cenocepacia (strain HI2424)</name>
    <dbReference type="NCBI Taxonomy" id="331272"/>
    <lineage>
        <taxon>Bacteria</taxon>
        <taxon>Pseudomonadati</taxon>
        <taxon>Pseudomonadota</taxon>
        <taxon>Betaproteobacteria</taxon>
        <taxon>Burkholderiales</taxon>
        <taxon>Burkholderiaceae</taxon>
        <taxon>Burkholderia</taxon>
        <taxon>Burkholderia cepacia complex</taxon>
    </lineage>
</organism>
<name>CLPS_BURCH</name>
<reference key="1">
    <citation type="submission" date="2006-08" db="EMBL/GenBank/DDBJ databases">
        <title>Complete sequence of chromosome 1 of Burkholderia cenocepacia HI2424.</title>
        <authorList>
            <person name="Copeland A."/>
            <person name="Lucas S."/>
            <person name="Lapidus A."/>
            <person name="Barry K."/>
            <person name="Detter J.C."/>
            <person name="Glavina del Rio T."/>
            <person name="Hammon N."/>
            <person name="Israni S."/>
            <person name="Pitluck S."/>
            <person name="Chain P."/>
            <person name="Malfatti S."/>
            <person name="Shin M."/>
            <person name="Vergez L."/>
            <person name="Schmutz J."/>
            <person name="Larimer F."/>
            <person name="Land M."/>
            <person name="Hauser L."/>
            <person name="Kyrpides N."/>
            <person name="Kim E."/>
            <person name="LiPuma J.J."/>
            <person name="Gonzalez C.F."/>
            <person name="Konstantinidis K."/>
            <person name="Tiedje J.M."/>
            <person name="Richardson P."/>
        </authorList>
    </citation>
    <scope>NUCLEOTIDE SEQUENCE [LARGE SCALE GENOMIC DNA]</scope>
    <source>
        <strain>HI2424</strain>
    </source>
</reference>
<gene>
    <name evidence="1" type="primary">clpS</name>
    <name type="ordered locus">Bcen2424_2519</name>
</gene>
<dbReference type="EMBL" id="CP000458">
    <property type="protein sequence ID" value="ABK09269.1"/>
    <property type="molecule type" value="Genomic_DNA"/>
</dbReference>
<dbReference type="RefSeq" id="WP_006398529.1">
    <property type="nucleotide sequence ID" value="NC_008542.1"/>
</dbReference>
<dbReference type="SMR" id="A0K9U2"/>
<dbReference type="GeneID" id="98107640"/>
<dbReference type="KEGG" id="bch:Bcen2424_2519"/>
<dbReference type="HOGENOM" id="CLU_134358_0_0_4"/>
<dbReference type="GO" id="GO:0030163">
    <property type="term" value="P:protein catabolic process"/>
    <property type="evidence" value="ECO:0007669"/>
    <property type="project" value="InterPro"/>
</dbReference>
<dbReference type="GO" id="GO:0006508">
    <property type="term" value="P:proteolysis"/>
    <property type="evidence" value="ECO:0007669"/>
    <property type="project" value="UniProtKB-UniRule"/>
</dbReference>
<dbReference type="FunFam" id="3.30.1390.10:FF:000002">
    <property type="entry name" value="ATP-dependent Clp protease adapter protein ClpS"/>
    <property type="match status" value="1"/>
</dbReference>
<dbReference type="Gene3D" id="3.30.1390.10">
    <property type="match status" value="1"/>
</dbReference>
<dbReference type="HAMAP" id="MF_00302">
    <property type="entry name" value="ClpS"/>
    <property type="match status" value="1"/>
</dbReference>
<dbReference type="InterPro" id="IPR022935">
    <property type="entry name" value="ClpS"/>
</dbReference>
<dbReference type="InterPro" id="IPR003769">
    <property type="entry name" value="ClpS_core"/>
</dbReference>
<dbReference type="InterPro" id="IPR014719">
    <property type="entry name" value="Ribosomal_bL12_C/ClpS-like"/>
</dbReference>
<dbReference type="NCBIfam" id="NF000672">
    <property type="entry name" value="PRK00033.1-5"/>
    <property type="match status" value="1"/>
</dbReference>
<dbReference type="PANTHER" id="PTHR33473:SF19">
    <property type="entry name" value="ATP-DEPENDENT CLP PROTEASE ADAPTER PROTEIN CLPS"/>
    <property type="match status" value="1"/>
</dbReference>
<dbReference type="PANTHER" id="PTHR33473">
    <property type="entry name" value="ATP-DEPENDENT CLP PROTEASE ADAPTER PROTEIN CLPS1, CHLOROPLASTIC"/>
    <property type="match status" value="1"/>
</dbReference>
<dbReference type="Pfam" id="PF02617">
    <property type="entry name" value="ClpS"/>
    <property type="match status" value="1"/>
</dbReference>
<dbReference type="SUPFAM" id="SSF54736">
    <property type="entry name" value="ClpS-like"/>
    <property type="match status" value="1"/>
</dbReference>
<evidence type="ECO:0000255" key="1">
    <source>
        <dbReference type="HAMAP-Rule" id="MF_00302"/>
    </source>
</evidence>